<accession>O24734</accession>
<accession>F9VNY9</accession>
<comment type="function">
    <text evidence="1">Molecular chaperone; binds unfolded polypeptides in vitro, and has a weak ATPase activity.</text>
</comment>
<comment type="subunit">
    <text evidence="1">Forms a Heterooligomeric complex of two stacked nine-membered rings; one of alpha and the other of beta subunits.</text>
</comment>
<comment type="similarity">
    <text evidence="3">Belongs to the TCP-1 chaperonin family.</text>
</comment>
<keyword id="KW-0067">ATP-binding</keyword>
<keyword id="KW-0143">Chaperone</keyword>
<keyword id="KW-0903">Direct protein sequencing</keyword>
<keyword id="KW-0547">Nucleotide-binding</keyword>
<keyword id="KW-1185">Reference proteome</keyword>
<sequence>MANAPVLLLKEGTQRSSGRDALKNNILAAVTLAEMLKSSLGPRGLDKMLIDSFGDVTITNDGATIVKEMEIQHPAAKLLVEAAKAQDAEVGDGTTSAVVLAGLLLDKADDLLDQNIHPTIIIEGYKKALNKSLEIIDQLATKIDVSNLNSLATRDQLKKIVYTTMSSKFIAGGEEMDKIMNMVIDAVSIVAEPLPEGGYNVPLDLIKIDKKKGGSIEDSMLVHGLVLDKEVVHPGMPRRVEKAKIAVLDAALEVEKPEISAKISITSPEQIKAFLDEEAKYLKDMVDKLASIGANVVICQKGIDDVAQHFLAKKGILAVRRVKRSDIEKLEKALGARIISSIKDATPEDLGYAELVEERRVGNDKMVFIEGAKNPKAVNILLRGSNDMALDEAERSINDALHSLRNVLMKPMIVAGGGAVETELALRLREYARSVGGKEQLAIEKFAEALEEIPMILAETAGMEPIQTLMDLRAKHAKGLINAGVDVMNGKIADDMLALNVLEPVRVKAQVLKSAVEAATAILKIDDLIAAAPLKSGEKKGEKKEGGEEEKSSTPSSLE</sequence>
<evidence type="ECO:0000250" key="1"/>
<evidence type="ECO:0000256" key="2">
    <source>
        <dbReference type="SAM" id="MobiDB-lite"/>
    </source>
</evidence>
<evidence type="ECO:0000305" key="3"/>
<feature type="chain" id="PRO_0000128407" description="Thermosome subunit alpha">
    <location>
        <begin position="1"/>
        <end position="559"/>
    </location>
</feature>
<feature type="region of interest" description="Disordered" evidence="2">
    <location>
        <begin position="536"/>
        <end position="559"/>
    </location>
</feature>
<feature type="compositionally biased region" description="Basic and acidic residues" evidence="2">
    <location>
        <begin position="536"/>
        <end position="552"/>
    </location>
</feature>
<reference key="1">
    <citation type="journal article" date="1997" name="Biochem. Biophys. Res. Commun.">
        <title>Purification and molecular cloning of the group II chaperonin from the acidothermophilic archaeon, Sulfolobus sp. strain 7.</title>
        <authorList>
            <person name="Nakamura N."/>
            <person name="Taguchi H."/>
            <person name="Ishii N."/>
            <person name="Yoshida M."/>
            <person name="Suzuki M."/>
            <person name="Endo I."/>
            <person name="Miura K."/>
            <person name="Yohda M."/>
        </authorList>
    </citation>
    <scope>NUCLEOTIDE SEQUENCE [GENOMIC DNA]</scope>
    <scope>PROTEIN SEQUENCE OF 183-202 AND 221-235</scope>
    <source>
        <strain>DSM 16993 / JCM 10545 / NBRC 100140 / 7</strain>
    </source>
</reference>
<reference key="2">
    <citation type="journal article" date="2001" name="DNA Res.">
        <title>Complete genome sequence of an aerobic thermoacidophilic Crenarchaeon, Sulfolobus tokodaii strain7.</title>
        <authorList>
            <person name="Kawarabayasi Y."/>
            <person name="Hino Y."/>
            <person name="Horikawa H."/>
            <person name="Jin-no K."/>
            <person name="Takahashi M."/>
            <person name="Sekine M."/>
            <person name="Baba S."/>
            <person name="Ankai A."/>
            <person name="Kosugi H."/>
            <person name="Hosoyama A."/>
            <person name="Fukui S."/>
            <person name="Nagai Y."/>
            <person name="Nishijima K."/>
            <person name="Otsuka R."/>
            <person name="Nakazawa H."/>
            <person name="Takamiya M."/>
            <person name="Kato Y."/>
            <person name="Yoshizawa T."/>
            <person name="Tanaka T."/>
            <person name="Kudoh Y."/>
            <person name="Yamazaki J."/>
            <person name="Kushida N."/>
            <person name="Oguchi A."/>
            <person name="Aoki K."/>
            <person name="Masuda S."/>
            <person name="Yanagii M."/>
            <person name="Nishimura M."/>
            <person name="Yamagishi A."/>
            <person name="Oshima T."/>
            <person name="Kikuchi H."/>
        </authorList>
    </citation>
    <scope>NUCLEOTIDE SEQUENCE [LARGE SCALE GENOMIC DNA]</scope>
    <source>
        <strain>DSM 16993 / JCM 10545 / NBRC 100140 / 7</strain>
    </source>
</reference>
<organism>
    <name type="scientific">Sulfurisphaera tokodaii (strain DSM 16993 / JCM 10545 / NBRC 100140 / 7)</name>
    <name type="common">Sulfolobus tokodaii</name>
    <dbReference type="NCBI Taxonomy" id="273063"/>
    <lineage>
        <taxon>Archaea</taxon>
        <taxon>Thermoproteota</taxon>
        <taxon>Thermoprotei</taxon>
        <taxon>Sulfolobales</taxon>
        <taxon>Sulfolobaceae</taxon>
        <taxon>Sulfurisphaera</taxon>
    </lineage>
</organism>
<dbReference type="EMBL" id="AB001085">
    <property type="protein sequence ID" value="BAA22212.1"/>
    <property type="molecule type" value="Genomic_DNA"/>
</dbReference>
<dbReference type="EMBL" id="BA000023">
    <property type="protein sequence ID" value="BAK54497.1"/>
    <property type="molecule type" value="Genomic_DNA"/>
</dbReference>
<dbReference type="PIR" id="JC5616">
    <property type="entry name" value="JC5616"/>
</dbReference>
<dbReference type="RefSeq" id="WP_052846517.1">
    <property type="nucleotide sequence ID" value="NC_003106.2"/>
</dbReference>
<dbReference type="SMR" id="O24734"/>
<dbReference type="STRING" id="273063.STK_12530"/>
<dbReference type="GeneID" id="1459250"/>
<dbReference type="KEGG" id="sto:STK_12530"/>
<dbReference type="PATRIC" id="fig|273063.9.peg.1411"/>
<dbReference type="eggNOG" id="arCOG01257">
    <property type="taxonomic scope" value="Archaea"/>
</dbReference>
<dbReference type="OrthoDB" id="9362at2157"/>
<dbReference type="BRENDA" id="5.6.1.7">
    <property type="organism ID" value="15396"/>
</dbReference>
<dbReference type="Proteomes" id="UP000001015">
    <property type="component" value="Chromosome"/>
</dbReference>
<dbReference type="GO" id="GO:0005524">
    <property type="term" value="F:ATP binding"/>
    <property type="evidence" value="ECO:0007669"/>
    <property type="project" value="UniProtKB-KW"/>
</dbReference>
<dbReference type="GO" id="GO:0016887">
    <property type="term" value="F:ATP hydrolysis activity"/>
    <property type="evidence" value="ECO:0007669"/>
    <property type="project" value="InterPro"/>
</dbReference>
<dbReference type="GO" id="GO:0140662">
    <property type="term" value="F:ATP-dependent protein folding chaperone"/>
    <property type="evidence" value="ECO:0007669"/>
    <property type="project" value="InterPro"/>
</dbReference>
<dbReference type="GO" id="GO:0051082">
    <property type="term" value="F:unfolded protein binding"/>
    <property type="evidence" value="ECO:0007669"/>
    <property type="project" value="InterPro"/>
</dbReference>
<dbReference type="CDD" id="cd03343">
    <property type="entry name" value="cpn60"/>
    <property type="match status" value="1"/>
</dbReference>
<dbReference type="Gene3D" id="3.50.7.10">
    <property type="entry name" value="GroEL"/>
    <property type="match status" value="1"/>
</dbReference>
<dbReference type="Gene3D" id="1.10.560.10">
    <property type="entry name" value="GroEL-like equatorial domain"/>
    <property type="match status" value="1"/>
</dbReference>
<dbReference type="Gene3D" id="3.30.260.10">
    <property type="entry name" value="TCP-1-like chaperonin intermediate domain"/>
    <property type="match status" value="1"/>
</dbReference>
<dbReference type="InterPro" id="IPR017998">
    <property type="entry name" value="Chaperone_TCP-1"/>
</dbReference>
<dbReference type="InterPro" id="IPR002194">
    <property type="entry name" value="Chaperonin_TCP-1_CS"/>
</dbReference>
<dbReference type="InterPro" id="IPR002423">
    <property type="entry name" value="Cpn60/GroEL/TCP-1"/>
</dbReference>
<dbReference type="InterPro" id="IPR027409">
    <property type="entry name" value="GroEL-like_apical_dom_sf"/>
</dbReference>
<dbReference type="InterPro" id="IPR027413">
    <property type="entry name" value="GROEL-like_equatorial_sf"/>
</dbReference>
<dbReference type="InterPro" id="IPR027410">
    <property type="entry name" value="TCP-1-like_intermed_sf"/>
</dbReference>
<dbReference type="InterPro" id="IPR053374">
    <property type="entry name" value="TCP-1_chaperonin"/>
</dbReference>
<dbReference type="InterPro" id="IPR054827">
    <property type="entry name" value="thermosome_alpha"/>
</dbReference>
<dbReference type="InterPro" id="IPR012714">
    <property type="entry name" value="Thermosome_arc"/>
</dbReference>
<dbReference type="NCBIfam" id="NF041082">
    <property type="entry name" value="thermosome_alpha"/>
    <property type="match status" value="1"/>
</dbReference>
<dbReference type="NCBIfam" id="TIGR02339">
    <property type="entry name" value="thermosome_arch"/>
    <property type="match status" value="1"/>
</dbReference>
<dbReference type="NCBIfam" id="NF041083">
    <property type="entry name" value="thermosome_beta"/>
    <property type="match status" value="1"/>
</dbReference>
<dbReference type="PANTHER" id="PTHR11353">
    <property type="entry name" value="CHAPERONIN"/>
    <property type="match status" value="1"/>
</dbReference>
<dbReference type="Pfam" id="PF00118">
    <property type="entry name" value="Cpn60_TCP1"/>
    <property type="match status" value="1"/>
</dbReference>
<dbReference type="PRINTS" id="PR00304">
    <property type="entry name" value="TCOMPLEXTCP1"/>
</dbReference>
<dbReference type="SUPFAM" id="SSF52029">
    <property type="entry name" value="GroEL apical domain-like"/>
    <property type="match status" value="1"/>
</dbReference>
<dbReference type="SUPFAM" id="SSF48592">
    <property type="entry name" value="GroEL equatorial domain-like"/>
    <property type="match status" value="1"/>
</dbReference>
<dbReference type="SUPFAM" id="SSF54849">
    <property type="entry name" value="GroEL-intermediate domain like"/>
    <property type="match status" value="1"/>
</dbReference>
<dbReference type="PROSITE" id="PS00750">
    <property type="entry name" value="TCP1_1"/>
    <property type="match status" value="1"/>
</dbReference>
<dbReference type="PROSITE" id="PS00751">
    <property type="entry name" value="TCP1_2"/>
    <property type="match status" value="1"/>
</dbReference>
<dbReference type="PROSITE" id="PS00995">
    <property type="entry name" value="TCP1_3"/>
    <property type="match status" value="1"/>
</dbReference>
<proteinExistence type="evidence at protein level"/>
<gene>
    <name type="primary">thsA</name>
    <name type="ordered locus">STK_12530</name>
</gene>
<name>THSA_SULTO</name>
<protein>
    <recommendedName>
        <fullName>Thermosome subunit alpha</fullName>
    </recommendedName>
    <alternativeName>
        <fullName>Chaperonin subunit alpha</fullName>
    </alternativeName>
    <alternativeName>
        <fullName>Thermosome subunit 1</fullName>
    </alternativeName>
</protein>